<name>TRUB_BRUC2</name>
<organism>
    <name type="scientific">Brucella canis (strain ATCC 23365 / NCTC 10854 / RM-666)</name>
    <dbReference type="NCBI Taxonomy" id="483179"/>
    <lineage>
        <taxon>Bacteria</taxon>
        <taxon>Pseudomonadati</taxon>
        <taxon>Pseudomonadota</taxon>
        <taxon>Alphaproteobacteria</taxon>
        <taxon>Hyphomicrobiales</taxon>
        <taxon>Brucellaceae</taxon>
        <taxon>Brucella/Ochrobactrum group</taxon>
        <taxon>Brucella</taxon>
    </lineage>
</organism>
<dbReference type="EC" id="5.4.99.25" evidence="1"/>
<dbReference type="EMBL" id="CP000872">
    <property type="protein sequence ID" value="ABX63191.1"/>
    <property type="molecule type" value="Genomic_DNA"/>
</dbReference>
<dbReference type="RefSeq" id="WP_004692055.1">
    <property type="nucleotide sequence ID" value="NC_010103.1"/>
</dbReference>
<dbReference type="SMR" id="A9M9Z6"/>
<dbReference type="GeneID" id="55591728"/>
<dbReference type="KEGG" id="bcs:BCAN_A2209"/>
<dbReference type="HOGENOM" id="CLU_032087_0_3_5"/>
<dbReference type="PhylomeDB" id="A9M9Z6"/>
<dbReference type="Proteomes" id="UP000001385">
    <property type="component" value="Chromosome I"/>
</dbReference>
<dbReference type="GO" id="GO:0003723">
    <property type="term" value="F:RNA binding"/>
    <property type="evidence" value="ECO:0007669"/>
    <property type="project" value="InterPro"/>
</dbReference>
<dbReference type="GO" id="GO:0160148">
    <property type="term" value="F:tRNA pseudouridine(55) synthase activity"/>
    <property type="evidence" value="ECO:0007669"/>
    <property type="project" value="UniProtKB-EC"/>
</dbReference>
<dbReference type="GO" id="GO:1990481">
    <property type="term" value="P:mRNA pseudouridine synthesis"/>
    <property type="evidence" value="ECO:0007669"/>
    <property type="project" value="TreeGrafter"/>
</dbReference>
<dbReference type="GO" id="GO:0031119">
    <property type="term" value="P:tRNA pseudouridine synthesis"/>
    <property type="evidence" value="ECO:0007669"/>
    <property type="project" value="UniProtKB-UniRule"/>
</dbReference>
<dbReference type="CDD" id="cd02573">
    <property type="entry name" value="PseudoU_synth_EcTruB"/>
    <property type="match status" value="1"/>
</dbReference>
<dbReference type="Gene3D" id="3.30.2350.10">
    <property type="entry name" value="Pseudouridine synthase"/>
    <property type="match status" value="1"/>
</dbReference>
<dbReference type="HAMAP" id="MF_01080">
    <property type="entry name" value="TruB_bact"/>
    <property type="match status" value="1"/>
</dbReference>
<dbReference type="InterPro" id="IPR020103">
    <property type="entry name" value="PsdUridine_synth_cat_dom_sf"/>
</dbReference>
<dbReference type="InterPro" id="IPR002501">
    <property type="entry name" value="PsdUridine_synth_N"/>
</dbReference>
<dbReference type="InterPro" id="IPR014780">
    <property type="entry name" value="tRNA_psdUridine_synth_TruB"/>
</dbReference>
<dbReference type="InterPro" id="IPR015240">
    <property type="entry name" value="tRNA_sdUridine_synth_fam1_C"/>
</dbReference>
<dbReference type="InterPro" id="IPR032819">
    <property type="entry name" value="TruB_C"/>
</dbReference>
<dbReference type="NCBIfam" id="TIGR00431">
    <property type="entry name" value="TruB"/>
    <property type="match status" value="1"/>
</dbReference>
<dbReference type="PANTHER" id="PTHR13767:SF2">
    <property type="entry name" value="PSEUDOURIDYLATE SYNTHASE TRUB1"/>
    <property type="match status" value="1"/>
</dbReference>
<dbReference type="PANTHER" id="PTHR13767">
    <property type="entry name" value="TRNA-PSEUDOURIDINE SYNTHASE"/>
    <property type="match status" value="1"/>
</dbReference>
<dbReference type="Pfam" id="PF09157">
    <property type="entry name" value="TruB-C_2"/>
    <property type="match status" value="1"/>
</dbReference>
<dbReference type="Pfam" id="PF16198">
    <property type="entry name" value="TruB_C_2"/>
    <property type="match status" value="1"/>
</dbReference>
<dbReference type="Pfam" id="PF01509">
    <property type="entry name" value="TruB_N"/>
    <property type="match status" value="1"/>
</dbReference>
<dbReference type="SUPFAM" id="SSF55120">
    <property type="entry name" value="Pseudouridine synthase"/>
    <property type="match status" value="1"/>
</dbReference>
<gene>
    <name evidence="1" type="primary">truB</name>
    <name type="ordered locus">BCAN_A2209</name>
</gene>
<sequence>MARRGKKKGRPISGWVIFDKPKGMGSTEAVSKIKWLFSAEKAGHAGTLDPLASGMLPIALGEATKTVPYVMDGTKVYRFTVTWGEERSTDDLEGQPTKTSDKRPSREEVEALLPDYTGVISQVPPQFSAIKIDGERAYDLAREGETVEIPTREVEIDRLEIVGFPDADRTEFEVECSKGTYVRSLARDMGRDLGCYGHISDLRRVEVAPFTDEDMVTLAKLEAVWPPLPPKDEDGNVIEPAPRRDFSALDALVIDTGAALDCLPQVPLSDDQAQRVRLGNPVILRGRDAPLEADEACVTTRGKLLAIGYIEHGQFKPKRVFTAG</sequence>
<comment type="function">
    <text evidence="1">Responsible for synthesis of pseudouridine from uracil-55 in the psi GC loop of transfer RNAs.</text>
</comment>
<comment type="catalytic activity">
    <reaction evidence="1">
        <text>uridine(55) in tRNA = pseudouridine(55) in tRNA</text>
        <dbReference type="Rhea" id="RHEA:42532"/>
        <dbReference type="Rhea" id="RHEA-COMP:10101"/>
        <dbReference type="Rhea" id="RHEA-COMP:10102"/>
        <dbReference type="ChEBI" id="CHEBI:65314"/>
        <dbReference type="ChEBI" id="CHEBI:65315"/>
        <dbReference type="EC" id="5.4.99.25"/>
    </reaction>
</comment>
<comment type="similarity">
    <text evidence="1">Belongs to the pseudouridine synthase TruB family. Type 1 subfamily.</text>
</comment>
<evidence type="ECO:0000255" key="1">
    <source>
        <dbReference type="HAMAP-Rule" id="MF_01080"/>
    </source>
</evidence>
<evidence type="ECO:0000256" key="2">
    <source>
        <dbReference type="SAM" id="MobiDB-lite"/>
    </source>
</evidence>
<protein>
    <recommendedName>
        <fullName evidence="1">tRNA pseudouridine synthase B</fullName>
        <ecNumber evidence="1">5.4.99.25</ecNumber>
    </recommendedName>
    <alternativeName>
        <fullName evidence="1">tRNA pseudouridine(55) synthase</fullName>
        <shortName evidence="1">Psi55 synthase</shortName>
    </alternativeName>
    <alternativeName>
        <fullName evidence="1">tRNA pseudouridylate synthase</fullName>
    </alternativeName>
    <alternativeName>
        <fullName evidence="1">tRNA-uridine isomerase</fullName>
    </alternativeName>
</protein>
<feature type="chain" id="PRO_1000084555" description="tRNA pseudouridine synthase B">
    <location>
        <begin position="1"/>
        <end position="324"/>
    </location>
</feature>
<feature type="region of interest" description="Disordered" evidence="2">
    <location>
        <begin position="87"/>
        <end position="107"/>
    </location>
</feature>
<feature type="active site" description="Nucleophile" evidence="1">
    <location>
        <position position="49"/>
    </location>
</feature>
<reference key="1">
    <citation type="submission" date="2007-10" db="EMBL/GenBank/DDBJ databases">
        <title>Brucella canis ATCC 23365 whole genome shotgun sequencing project.</title>
        <authorList>
            <person name="Setubal J.C."/>
            <person name="Bowns C."/>
            <person name="Boyle S."/>
            <person name="Crasta O.R."/>
            <person name="Czar M.J."/>
            <person name="Dharmanolla C."/>
            <person name="Gillespie J.J."/>
            <person name="Kenyon R.W."/>
            <person name="Lu J."/>
            <person name="Mane S."/>
            <person name="Mohapatra S."/>
            <person name="Nagrani S."/>
            <person name="Purkayastha A."/>
            <person name="Rajasimha H.K."/>
            <person name="Shallom J.M."/>
            <person name="Shallom S."/>
            <person name="Shukla M."/>
            <person name="Snyder E.E."/>
            <person name="Sobral B.W."/>
            <person name="Wattam A.R."/>
            <person name="Will R."/>
            <person name="Williams K."/>
            <person name="Yoo H."/>
            <person name="Bruce D."/>
            <person name="Detter C."/>
            <person name="Munk C."/>
            <person name="Brettin T.S."/>
        </authorList>
    </citation>
    <scope>NUCLEOTIDE SEQUENCE [LARGE SCALE GENOMIC DNA]</scope>
    <source>
        <strain>ATCC 23365 / NCTC 10854 / RM-666</strain>
    </source>
</reference>
<proteinExistence type="inferred from homology"/>
<accession>A9M9Z6</accession>
<keyword id="KW-0413">Isomerase</keyword>
<keyword id="KW-1185">Reference proteome</keyword>
<keyword id="KW-0819">tRNA processing</keyword>